<keyword id="KW-0528">Neurotoxin</keyword>
<keyword id="KW-0964">Secreted</keyword>
<keyword id="KW-0732">Signal</keyword>
<keyword id="KW-0800">Toxin</keyword>
<organism>
    <name type="scientific">Pogona barbata</name>
    <name type="common">Bearded dragon</name>
    <dbReference type="NCBI Taxonomy" id="52202"/>
    <lineage>
        <taxon>Eukaryota</taxon>
        <taxon>Metazoa</taxon>
        <taxon>Chordata</taxon>
        <taxon>Craniata</taxon>
        <taxon>Vertebrata</taxon>
        <taxon>Euteleostomi</taxon>
        <taxon>Lepidosauria</taxon>
        <taxon>Squamata</taxon>
        <taxon>Bifurcata</taxon>
        <taxon>Unidentata</taxon>
        <taxon>Episquamata</taxon>
        <taxon>Toxicofera</taxon>
        <taxon>Iguania</taxon>
        <taxon>Acrodonta</taxon>
        <taxon>Agamidae</taxon>
        <taxon>Amphibolurinae</taxon>
        <taxon>Pogona</taxon>
    </lineage>
</organism>
<feature type="signal peptide" evidence="2">
    <location>
        <begin position="1"/>
        <end position="15"/>
    </location>
</feature>
<feature type="chain" id="PRO_0000253030" description="Vespryn">
    <location>
        <begin position="16"/>
        <end position="115" status="greater than"/>
    </location>
</feature>
<feature type="domain" description="B30.2/SPRY" evidence="3">
    <location>
        <begin position="22"/>
        <end position="115" status="greater than"/>
    </location>
</feature>
<feature type="non-terminal residue">
    <location>
        <position position="115"/>
    </location>
</feature>
<comment type="function">
    <text evidence="1">Neurotoxin that produces dose-dependent hypolocomotion and hyperalgesia in mice. May directly act on the central nervous system, as it is 6500-fold more potent when administered intracerebroventricularly than intraperitoneal.</text>
</comment>
<comment type="subcellular location">
    <subcellularLocation>
        <location evidence="6">Secreted</location>
    </subcellularLocation>
</comment>
<comment type="tissue specificity">
    <text evidence="6">Expressed by the venom gland.</text>
</comment>
<comment type="similarity">
    <text evidence="5">Belongs to the ohanin/vespryn family.</text>
</comment>
<protein>
    <recommendedName>
        <fullName evidence="4">Vespryn</fullName>
    </recommendedName>
</protein>
<proteinExistence type="evidence at transcript level"/>
<reference key="1">
    <citation type="journal article" date="2006" name="Nature">
        <title>Early evolution of the venom system in lizards and snakes.</title>
        <authorList>
            <person name="Fry B.G."/>
            <person name="Vidal N."/>
            <person name="Norman J.A."/>
            <person name="Vonk F.J."/>
            <person name="Scheib H."/>
            <person name="Ramjan S.F.R."/>
            <person name="Kuruppu S."/>
            <person name="Fung K."/>
            <person name="Blair Hedges S."/>
            <person name="Richardson M.K."/>
            <person name="Hodgson W.C."/>
            <person name="Ignjatovic V."/>
            <person name="Summerhayes R."/>
            <person name="Kochva E."/>
        </authorList>
    </citation>
    <scope>NUCLEOTIDE SEQUENCE [LARGE SCALE MRNA]</scope>
    <source>
        <tissue>Venom gland</tissue>
    </source>
</reference>
<evidence type="ECO:0000250" key="1">
    <source>
        <dbReference type="UniProtKB" id="P83234"/>
    </source>
</evidence>
<evidence type="ECO:0000255" key="2"/>
<evidence type="ECO:0000255" key="3">
    <source>
        <dbReference type="PROSITE-ProRule" id="PRU00548"/>
    </source>
</evidence>
<evidence type="ECO:0000303" key="4">
    <source>
    </source>
</evidence>
<evidence type="ECO:0000305" key="5"/>
<evidence type="ECO:0000305" key="6">
    <source>
    </source>
</evidence>
<dbReference type="EMBL" id="DQ139931">
    <property type="protein sequence ID" value="AAZ75637.1"/>
    <property type="molecule type" value="mRNA"/>
</dbReference>
<dbReference type="SMR" id="Q2XXL4"/>
<dbReference type="GO" id="GO:0005576">
    <property type="term" value="C:extracellular region"/>
    <property type="evidence" value="ECO:0007669"/>
    <property type="project" value="UniProtKB-SubCell"/>
</dbReference>
<dbReference type="GO" id="GO:0090729">
    <property type="term" value="F:toxin activity"/>
    <property type="evidence" value="ECO:0007669"/>
    <property type="project" value="UniProtKB-KW"/>
</dbReference>
<dbReference type="Gene3D" id="2.60.120.920">
    <property type="match status" value="1"/>
</dbReference>
<dbReference type="InterPro" id="IPR001870">
    <property type="entry name" value="B30.2/SPRY"/>
</dbReference>
<dbReference type="InterPro" id="IPR043136">
    <property type="entry name" value="B30.2/SPRY_sf"/>
</dbReference>
<dbReference type="InterPro" id="IPR003879">
    <property type="entry name" value="Butyrophylin_SPRY"/>
</dbReference>
<dbReference type="InterPro" id="IPR013320">
    <property type="entry name" value="ConA-like_dom_sf"/>
</dbReference>
<dbReference type="InterPro" id="IPR006574">
    <property type="entry name" value="PRY"/>
</dbReference>
<dbReference type="InterPro" id="IPR050143">
    <property type="entry name" value="TRIM/RBCC"/>
</dbReference>
<dbReference type="PANTHER" id="PTHR24103">
    <property type="entry name" value="E3 UBIQUITIN-PROTEIN LIGASE TRIM"/>
    <property type="match status" value="1"/>
</dbReference>
<dbReference type="Pfam" id="PF13765">
    <property type="entry name" value="PRY"/>
    <property type="match status" value="1"/>
</dbReference>
<dbReference type="PRINTS" id="PR01407">
    <property type="entry name" value="BUTYPHLNCDUF"/>
</dbReference>
<dbReference type="SMART" id="SM00589">
    <property type="entry name" value="PRY"/>
    <property type="match status" value="1"/>
</dbReference>
<dbReference type="SUPFAM" id="SSF49899">
    <property type="entry name" value="Concanavalin A-like lectins/glucanases"/>
    <property type="match status" value="1"/>
</dbReference>
<dbReference type="PROSITE" id="PS50188">
    <property type="entry name" value="B302_SPRY"/>
    <property type="match status" value="1"/>
</dbReference>
<sequence length="115" mass="12875">MTWLLLCLLAQYENGGKVLALSSSAKPYKTSVRFDPKTAHPNLVVSQDKKTVTWVQEAQSVPDNPERFNSTPCLLGSPGFTSGKHYWEVEYGNQRELAAGVARKSVKRKDHLRLT</sequence>
<name>VESP_POGBA</name>
<accession>Q2XXL4</accession>